<comment type="function">
    <text evidence="1">Key enzyme in the regulation of glycerol uptake and metabolism. Catalyzes the phosphorylation of glycerol to yield sn-glycerol 3-phosphate.</text>
</comment>
<comment type="catalytic activity">
    <reaction evidence="1">
        <text>glycerol + ATP = sn-glycerol 3-phosphate + ADP + H(+)</text>
        <dbReference type="Rhea" id="RHEA:21644"/>
        <dbReference type="ChEBI" id="CHEBI:15378"/>
        <dbReference type="ChEBI" id="CHEBI:17754"/>
        <dbReference type="ChEBI" id="CHEBI:30616"/>
        <dbReference type="ChEBI" id="CHEBI:57597"/>
        <dbReference type="ChEBI" id="CHEBI:456216"/>
        <dbReference type="EC" id="2.7.1.30"/>
    </reaction>
</comment>
<comment type="activity regulation">
    <text evidence="1">Inhibited by fructose 1,6-bisphosphate (FBP).</text>
</comment>
<comment type="pathway">
    <text evidence="1">Polyol metabolism; glycerol degradation via glycerol kinase pathway; sn-glycerol 3-phosphate from glycerol: step 1/1.</text>
</comment>
<comment type="similarity">
    <text evidence="1">Belongs to the FGGY kinase family.</text>
</comment>
<gene>
    <name evidence="1" type="primary">glpK</name>
    <name type="ordered locus">Glov_2688</name>
</gene>
<reference key="1">
    <citation type="submission" date="2008-05" db="EMBL/GenBank/DDBJ databases">
        <title>Complete sequence of chromosome of Geobacter lovleyi SZ.</title>
        <authorList>
            <consortium name="US DOE Joint Genome Institute"/>
            <person name="Lucas S."/>
            <person name="Copeland A."/>
            <person name="Lapidus A."/>
            <person name="Glavina del Rio T."/>
            <person name="Dalin E."/>
            <person name="Tice H."/>
            <person name="Bruce D."/>
            <person name="Goodwin L."/>
            <person name="Pitluck S."/>
            <person name="Chertkov O."/>
            <person name="Meincke L."/>
            <person name="Brettin T."/>
            <person name="Detter J.C."/>
            <person name="Han C."/>
            <person name="Tapia R."/>
            <person name="Kuske C.R."/>
            <person name="Schmutz J."/>
            <person name="Larimer F."/>
            <person name="Land M."/>
            <person name="Hauser L."/>
            <person name="Kyrpides N."/>
            <person name="Mikhailova N."/>
            <person name="Sung Y."/>
            <person name="Fletcher K.E."/>
            <person name="Ritalahti K.M."/>
            <person name="Loeffler F.E."/>
            <person name="Richardson P."/>
        </authorList>
    </citation>
    <scope>NUCLEOTIDE SEQUENCE [LARGE SCALE GENOMIC DNA]</scope>
    <source>
        <strain>ATCC BAA-1151 / DSM 17278 / SZ</strain>
    </source>
</reference>
<dbReference type="EC" id="2.7.1.30" evidence="1"/>
<dbReference type="EMBL" id="CP001089">
    <property type="protein sequence ID" value="ACD96401.1"/>
    <property type="molecule type" value="Genomic_DNA"/>
</dbReference>
<dbReference type="RefSeq" id="WP_012470731.1">
    <property type="nucleotide sequence ID" value="NC_010814.1"/>
</dbReference>
<dbReference type="SMR" id="B3E6Z6"/>
<dbReference type="STRING" id="398767.Glov_2688"/>
<dbReference type="KEGG" id="glo:Glov_2688"/>
<dbReference type="eggNOG" id="COG0554">
    <property type="taxonomic scope" value="Bacteria"/>
</dbReference>
<dbReference type="HOGENOM" id="CLU_009281_2_3_7"/>
<dbReference type="OrthoDB" id="9805576at2"/>
<dbReference type="UniPathway" id="UPA00618">
    <property type="reaction ID" value="UER00672"/>
</dbReference>
<dbReference type="Proteomes" id="UP000002420">
    <property type="component" value="Chromosome"/>
</dbReference>
<dbReference type="GO" id="GO:0005829">
    <property type="term" value="C:cytosol"/>
    <property type="evidence" value="ECO:0007669"/>
    <property type="project" value="TreeGrafter"/>
</dbReference>
<dbReference type="GO" id="GO:0005524">
    <property type="term" value="F:ATP binding"/>
    <property type="evidence" value="ECO:0007669"/>
    <property type="project" value="UniProtKB-UniRule"/>
</dbReference>
<dbReference type="GO" id="GO:0004370">
    <property type="term" value="F:glycerol kinase activity"/>
    <property type="evidence" value="ECO:0000250"/>
    <property type="project" value="UniProtKB"/>
</dbReference>
<dbReference type="GO" id="GO:0019563">
    <property type="term" value="P:glycerol catabolic process"/>
    <property type="evidence" value="ECO:0007669"/>
    <property type="project" value="UniProtKB-UniRule"/>
</dbReference>
<dbReference type="GO" id="GO:0006071">
    <property type="term" value="P:glycerol metabolic process"/>
    <property type="evidence" value="ECO:0000250"/>
    <property type="project" value="UniProtKB"/>
</dbReference>
<dbReference type="GO" id="GO:0006072">
    <property type="term" value="P:glycerol-3-phosphate metabolic process"/>
    <property type="evidence" value="ECO:0007669"/>
    <property type="project" value="InterPro"/>
</dbReference>
<dbReference type="CDD" id="cd07786">
    <property type="entry name" value="FGGY_EcGK_like"/>
    <property type="match status" value="1"/>
</dbReference>
<dbReference type="FunFam" id="3.30.420.40:FF:000007">
    <property type="entry name" value="Glycerol kinase"/>
    <property type="match status" value="1"/>
</dbReference>
<dbReference type="FunFam" id="3.30.420.40:FF:000008">
    <property type="entry name" value="Glycerol kinase"/>
    <property type="match status" value="1"/>
</dbReference>
<dbReference type="Gene3D" id="3.30.420.40">
    <property type="match status" value="2"/>
</dbReference>
<dbReference type="HAMAP" id="MF_00186">
    <property type="entry name" value="Glycerol_kin"/>
    <property type="match status" value="1"/>
</dbReference>
<dbReference type="InterPro" id="IPR043129">
    <property type="entry name" value="ATPase_NBD"/>
</dbReference>
<dbReference type="InterPro" id="IPR000577">
    <property type="entry name" value="Carb_kinase_FGGY"/>
</dbReference>
<dbReference type="InterPro" id="IPR018483">
    <property type="entry name" value="Carb_kinase_FGGY_CS"/>
</dbReference>
<dbReference type="InterPro" id="IPR018485">
    <property type="entry name" value="FGGY_C"/>
</dbReference>
<dbReference type="InterPro" id="IPR018484">
    <property type="entry name" value="FGGY_N"/>
</dbReference>
<dbReference type="InterPro" id="IPR005999">
    <property type="entry name" value="Glycerol_kin"/>
</dbReference>
<dbReference type="NCBIfam" id="TIGR01311">
    <property type="entry name" value="glycerol_kin"/>
    <property type="match status" value="1"/>
</dbReference>
<dbReference type="NCBIfam" id="NF000756">
    <property type="entry name" value="PRK00047.1"/>
    <property type="match status" value="1"/>
</dbReference>
<dbReference type="PANTHER" id="PTHR10196:SF69">
    <property type="entry name" value="GLYCEROL KINASE"/>
    <property type="match status" value="1"/>
</dbReference>
<dbReference type="PANTHER" id="PTHR10196">
    <property type="entry name" value="SUGAR KINASE"/>
    <property type="match status" value="1"/>
</dbReference>
<dbReference type="Pfam" id="PF02782">
    <property type="entry name" value="FGGY_C"/>
    <property type="match status" value="1"/>
</dbReference>
<dbReference type="Pfam" id="PF00370">
    <property type="entry name" value="FGGY_N"/>
    <property type="match status" value="1"/>
</dbReference>
<dbReference type="PIRSF" id="PIRSF000538">
    <property type="entry name" value="GlpK"/>
    <property type="match status" value="1"/>
</dbReference>
<dbReference type="SUPFAM" id="SSF53067">
    <property type="entry name" value="Actin-like ATPase domain"/>
    <property type="match status" value="2"/>
</dbReference>
<dbReference type="PROSITE" id="PS00933">
    <property type="entry name" value="FGGY_KINASES_1"/>
    <property type="match status" value="1"/>
</dbReference>
<dbReference type="PROSITE" id="PS00445">
    <property type="entry name" value="FGGY_KINASES_2"/>
    <property type="match status" value="1"/>
</dbReference>
<protein>
    <recommendedName>
        <fullName evidence="1">Glycerol kinase</fullName>
        <ecNumber evidence="1">2.7.1.30</ecNumber>
    </recommendedName>
    <alternativeName>
        <fullName evidence="1">ATP:glycerol 3-phosphotransferase</fullName>
    </alternativeName>
    <alternativeName>
        <fullName evidence="1">Glycerokinase</fullName>
        <shortName evidence="1">GK</shortName>
    </alternativeName>
</protein>
<proteinExistence type="inferred from homology"/>
<sequence length="496" mass="54169">MSFILALDQGTTSSRALVFDHDGTVRGLAQKEFRQIFPEPGLVEHDAEEIWASQLGVAVEAVARAGLSAADIAAIGITNQRETTVVWDRRTGKPIHNAIVWQDRRTAAECDRLKRLGLEATFRARTGLVLDPYFSGTKLAWLLDHLPGARDKAERGELAFGTIDSWLVWNLTGGERHLTDASNASRTLLFNIHEGNWDQELLQLLRIPPAILPEVVPSSQVYGETAARFFAARVPISGIAGDQQAALFGQLCDRPGMVKNTYGTGCFMLMQTGERPVLSERNLLTTVACRLGERTEYALEGSVFAAGAAVQWLRDGLGIIRSSEEVETLAATVPDNGGVYLVPAFAGLGAPHWDPYARGTLLGITRGSTAGHIARATLESIAFQTADLLEAMEADAATPLTELRVDGGATANNLLMQFQADLLGVPVVRPRVRETTALGAAYLAGLAIGYWQDRKELSRLWQAEQAFAPVLERERMAELRYNWNRAVERSKGWAQP</sequence>
<accession>B3E6Z6</accession>
<feature type="chain" id="PRO_1000098733" description="Glycerol kinase">
    <location>
        <begin position="1"/>
        <end position="496"/>
    </location>
</feature>
<feature type="binding site" evidence="1">
    <location>
        <position position="11"/>
    </location>
    <ligand>
        <name>ADP</name>
        <dbReference type="ChEBI" id="CHEBI:456216"/>
    </ligand>
</feature>
<feature type="binding site" evidence="1">
    <location>
        <position position="11"/>
    </location>
    <ligand>
        <name>ATP</name>
        <dbReference type="ChEBI" id="CHEBI:30616"/>
    </ligand>
</feature>
<feature type="binding site" evidence="1">
    <location>
        <position position="11"/>
    </location>
    <ligand>
        <name>sn-glycerol 3-phosphate</name>
        <dbReference type="ChEBI" id="CHEBI:57597"/>
    </ligand>
</feature>
<feature type="binding site" evidence="1">
    <location>
        <position position="12"/>
    </location>
    <ligand>
        <name>ATP</name>
        <dbReference type="ChEBI" id="CHEBI:30616"/>
    </ligand>
</feature>
<feature type="binding site" evidence="1">
    <location>
        <position position="13"/>
    </location>
    <ligand>
        <name>ATP</name>
        <dbReference type="ChEBI" id="CHEBI:30616"/>
    </ligand>
</feature>
<feature type="binding site" evidence="1">
    <location>
        <position position="15"/>
    </location>
    <ligand>
        <name>ADP</name>
        <dbReference type="ChEBI" id="CHEBI:456216"/>
    </ligand>
</feature>
<feature type="binding site" evidence="1">
    <location>
        <position position="81"/>
    </location>
    <ligand>
        <name>glycerol</name>
        <dbReference type="ChEBI" id="CHEBI:17754"/>
    </ligand>
</feature>
<feature type="binding site" evidence="1">
    <location>
        <position position="81"/>
    </location>
    <ligand>
        <name>sn-glycerol 3-phosphate</name>
        <dbReference type="ChEBI" id="CHEBI:57597"/>
    </ligand>
</feature>
<feature type="binding site" evidence="1">
    <location>
        <position position="82"/>
    </location>
    <ligand>
        <name>glycerol</name>
        <dbReference type="ChEBI" id="CHEBI:17754"/>
    </ligand>
</feature>
<feature type="binding site" evidence="1">
    <location>
        <position position="82"/>
    </location>
    <ligand>
        <name>sn-glycerol 3-phosphate</name>
        <dbReference type="ChEBI" id="CHEBI:57597"/>
    </ligand>
</feature>
<feature type="binding site" evidence="1">
    <location>
        <position position="133"/>
    </location>
    <ligand>
        <name>glycerol</name>
        <dbReference type="ChEBI" id="CHEBI:17754"/>
    </ligand>
</feature>
<feature type="binding site" evidence="1">
    <location>
        <position position="133"/>
    </location>
    <ligand>
        <name>sn-glycerol 3-phosphate</name>
        <dbReference type="ChEBI" id="CHEBI:57597"/>
    </ligand>
</feature>
<feature type="binding site" evidence="1">
    <location>
        <position position="242"/>
    </location>
    <ligand>
        <name>glycerol</name>
        <dbReference type="ChEBI" id="CHEBI:17754"/>
    </ligand>
</feature>
<feature type="binding site" evidence="1">
    <location>
        <position position="242"/>
    </location>
    <ligand>
        <name>sn-glycerol 3-phosphate</name>
        <dbReference type="ChEBI" id="CHEBI:57597"/>
    </ligand>
</feature>
<feature type="binding site" evidence="1">
    <location>
        <position position="243"/>
    </location>
    <ligand>
        <name>glycerol</name>
        <dbReference type="ChEBI" id="CHEBI:17754"/>
    </ligand>
</feature>
<feature type="binding site" evidence="1">
    <location>
        <position position="264"/>
    </location>
    <ligand>
        <name>ADP</name>
        <dbReference type="ChEBI" id="CHEBI:456216"/>
    </ligand>
</feature>
<feature type="binding site" evidence="1">
    <location>
        <position position="264"/>
    </location>
    <ligand>
        <name>ATP</name>
        <dbReference type="ChEBI" id="CHEBI:30616"/>
    </ligand>
</feature>
<feature type="binding site" evidence="1">
    <location>
        <position position="307"/>
    </location>
    <ligand>
        <name>ADP</name>
        <dbReference type="ChEBI" id="CHEBI:456216"/>
    </ligand>
</feature>
<feature type="binding site" evidence="1">
    <location>
        <position position="307"/>
    </location>
    <ligand>
        <name>ATP</name>
        <dbReference type="ChEBI" id="CHEBI:30616"/>
    </ligand>
</feature>
<feature type="binding site" evidence="1">
    <location>
        <position position="311"/>
    </location>
    <ligand>
        <name>ATP</name>
        <dbReference type="ChEBI" id="CHEBI:30616"/>
    </ligand>
</feature>
<feature type="binding site" evidence="1">
    <location>
        <position position="408"/>
    </location>
    <ligand>
        <name>ADP</name>
        <dbReference type="ChEBI" id="CHEBI:456216"/>
    </ligand>
</feature>
<feature type="binding site" evidence="1">
    <location>
        <position position="408"/>
    </location>
    <ligand>
        <name>ATP</name>
        <dbReference type="ChEBI" id="CHEBI:30616"/>
    </ligand>
</feature>
<feature type="binding site" evidence="1">
    <location>
        <position position="412"/>
    </location>
    <ligand>
        <name>ADP</name>
        <dbReference type="ChEBI" id="CHEBI:456216"/>
    </ligand>
</feature>
<organism>
    <name type="scientific">Trichlorobacter lovleyi (strain ATCC BAA-1151 / DSM 17278 / SZ)</name>
    <name type="common">Geobacter lovleyi</name>
    <dbReference type="NCBI Taxonomy" id="398767"/>
    <lineage>
        <taxon>Bacteria</taxon>
        <taxon>Pseudomonadati</taxon>
        <taxon>Thermodesulfobacteriota</taxon>
        <taxon>Desulfuromonadia</taxon>
        <taxon>Geobacterales</taxon>
        <taxon>Geobacteraceae</taxon>
        <taxon>Trichlorobacter</taxon>
    </lineage>
</organism>
<evidence type="ECO:0000255" key="1">
    <source>
        <dbReference type="HAMAP-Rule" id="MF_00186"/>
    </source>
</evidence>
<keyword id="KW-0067">ATP-binding</keyword>
<keyword id="KW-0319">Glycerol metabolism</keyword>
<keyword id="KW-0418">Kinase</keyword>
<keyword id="KW-0547">Nucleotide-binding</keyword>
<keyword id="KW-1185">Reference proteome</keyword>
<keyword id="KW-0808">Transferase</keyword>
<name>GLPK_TRIL1</name>